<keyword id="KW-0067">ATP-binding</keyword>
<keyword id="KW-0963">Cytoplasm</keyword>
<keyword id="KW-0275">Fatty acid biosynthesis</keyword>
<keyword id="KW-0276">Fatty acid metabolism</keyword>
<keyword id="KW-0444">Lipid biosynthesis</keyword>
<keyword id="KW-0443">Lipid metabolism</keyword>
<keyword id="KW-0479">Metal-binding</keyword>
<keyword id="KW-0547">Nucleotide-binding</keyword>
<keyword id="KW-1185">Reference proteome</keyword>
<keyword id="KW-0808">Transferase</keyword>
<keyword id="KW-0862">Zinc</keyword>
<keyword id="KW-0863">Zinc-finger</keyword>
<evidence type="ECO:0000255" key="1">
    <source>
        <dbReference type="HAMAP-Rule" id="MF_01395"/>
    </source>
</evidence>
<evidence type="ECO:0000255" key="2">
    <source>
        <dbReference type="PROSITE-ProRule" id="PRU01136"/>
    </source>
</evidence>
<evidence type="ECO:0000256" key="3">
    <source>
        <dbReference type="SAM" id="MobiDB-lite"/>
    </source>
</evidence>
<protein>
    <recommendedName>
        <fullName evidence="1">Acetyl-coenzyme A carboxylase carboxyl transferase subunit beta</fullName>
        <shortName evidence="1">ACCase subunit beta</shortName>
        <shortName evidence="1">Acetyl-CoA carboxylase carboxyltransferase subunit beta</shortName>
        <ecNumber evidence="1">2.1.3.15</ecNumber>
    </recommendedName>
</protein>
<name>ACCD_SHISS</name>
<dbReference type="EC" id="2.1.3.15" evidence="1"/>
<dbReference type="EMBL" id="CP000038">
    <property type="protein sequence ID" value="AAZ89017.1"/>
    <property type="molecule type" value="Genomic_DNA"/>
</dbReference>
<dbReference type="RefSeq" id="WP_000118398.1">
    <property type="nucleotide sequence ID" value="NC_007384.1"/>
</dbReference>
<dbReference type="SMR" id="Q3YZP5"/>
<dbReference type="GeneID" id="93774858"/>
<dbReference type="KEGG" id="ssn:SSON_2374"/>
<dbReference type="HOGENOM" id="CLU_015486_1_0_6"/>
<dbReference type="UniPathway" id="UPA00655">
    <property type="reaction ID" value="UER00711"/>
</dbReference>
<dbReference type="Proteomes" id="UP000002529">
    <property type="component" value="Chromosome"/>
</dbReference>
<dbReference type="GO" id="GO:0009329">
    <property type="term" value="C:acetate CoA-transferase complex"/>
    <property type="evidence" value="ECO:0007669"/>
    <property type="project" value="TreeGrafter"/>
</dbReference>
<dbReference type="GO" id="GO:0003989">
    <property type="term" value="F:acetyl-CoA carboxylase activity"/>
    <property type="evidence" value="ECO:0007669"/>
    <property type="project" value="InterPro"/>
</dbReference>
<dbReference type="GO" id="GO:0005524">
    <property type="term" value="F:ATP binding"/>
    <property type="evidence" value="ECO:0007669"/>
    <property type="project" value="UniProtKB-KW"/>
</dbReference>
<dbReference type="GO" id="GO:0016743">
    <property type="term" value="F:carboxyl- or carbamoyltransferase activity"/>
    <property type="evidence" value="ECO:0007669"/>
    <property type="project" value="UniProtKB-UniRule"/>
</dbReference>
<dbReference type="GO" id="GO:0008270">
    <property type="term" value="F:zinc ion binding"/>
    <property type="evidence" value="ECO:0007669"/>
    <property type="project" value="UniProtKB-UniRule"/>
</dbReference>
<dbReference type="GO" id="GO:0006633">
    <property type="term" value="P:fatty acid biosynthetic process"/>
    <property type="evidence" value="ECO:0007669"/>
    <property type="project" value="UniProtKB-KW"/>
</dbReference>
<dbReference type="GO" id="GO:2001295">
    <property type="term" value="P:malonyl-CoA biosynthetic process"/>
    <property type="evidence" value="ECO:0007669"/>
    <property type="project" value="UniProtKB-UniRule"/>
</dbReference>
<dbReference type="FunFam" id="3.90.226.10:FF:000013">
    <property type="entry name" value="Acetyl-coenzyme A carboxylase carboxyl transferase subunit beta"/>
    <property type="match status" value="1"/>
</dbReference>
<dbReference type="Gene3D" id="3.90.226.10">
    <property type="entry name" value="2-enoyl-CoA Hydratase, Chain A, domain 1"/>
    <property type="match status" value="1"/>
</dbReference>
<dbReference type="HAMAP" id="MF_01395">
    <property type="entry name" value="AcetylCoA_CT_beta"/>
    <property type="match status" value="1"/>
</dbReference>
<dbReference type="InterPro" id="IPR034733">
    <property type="entry name" value="AcCoA_carboxyl_beta"/>
</dbReference>
<dbReference type="InterPro" id="IPR000438">
    <property type="entry name" value="Acetyl_CoA_COase_Trfase_b_su"/>
</dbReference>
<dbReference type="InterPro" id="IPR029045">
    <property type="entry name" value="ClpP/crotonase-like_dom_sf"/>
</dbReference>
<dbReference type="InterPro" id="IPR011762">
    <property type="entry name" value="COA_CT_N"/>
</dbReference>
<dbReference type="InterPro" id="IPR041010">
    <property type="entry name" value="Znf-ACC"/>
</dbReference>
<dbReference type="NCBIfam" id="TIGR00515">
    <property type="entry name" value="accD"/>
    <property type="match status" value="1"/>
</dbReference>
<dbReference type="PANTHER" id="PTHR42995">
    <property type="entry name" value="ACETYL-COENZYME A CARBOXYLASE CARBOXYL TRANSFERASE SUBUNIT BETA, CHLOROPLASTIC"/>
    <property type="match status" value="1"/>
</dbReference>
<dbReference type="PANTHER" id="PTHR42995:SF5">
    <property type="entry name" value="ACETYL-COENZYME A CARBOXYLASE CARBOXYL TRANSFERASE SUBUNIT BETA, CHLOROPLASTIC"/>
    <property type="match status" value="1"/>
</dbReference>
<dbReference type="Pfam" id="PF01039">
    <property type="entry name" value="Carboxyl_trans"/>
    <property type="match status" value="1"/>
</dbReference>
<dbReference type="Pfam" id="PF17848">
    <property type="entry name" value="Zn_ribbon_ACC"/>
    <property type="match status" value="1"/>
</dbReference>
<dbReference type="PRINTS" id="PR01070">
    <property type="entry name" value="ACCCTRFRASEB"/>
</dbReference>
<dbReference type="SUPFAM" id="SSF52096">
    <property type="entry name" value="ClpP/crotonase"/>
    <property type="match status" value="1"/>
</dbReference>
<dbReference type="PROSITE" id="PS50980">
    <property type="entry name" value="COA_CT_NTER"/>
    <property type="match status" value="1"/>
</dbReference>
<sequence>MSWIERIKSNITPTRKASIPEGVWTKCDSCGQVLYRAELERNLEVCPKCDHHMRMTARNRLHSLLDEGSLVELGSELEPKDVLKFRDSKKYKDRLASAQKETGEKDALVVMKGTLYGMPVVAAAFEFAFMGGSMGSVVGARFVRAVEQALEDNCPLICFSASGGARMQEALMSLMQMAKTSAALAKMQERGLPYISVLTDPTMGGVSASFAMLGDLNIAEPKALIGFAGPRVIEQTVREKLPPGFQRSEFLIEKGAIDMIVHRPEMRLKLASILAKLMNLPAPNPEAPREGVVVPPVPDQEPEA</sequence>
<comment type="function">
    <text evidence="1">Component of the acetyl coenzyme A carboxylase (ACC) complex. Biotin carboxylase (BC) catalyzes the carboxylation of biotin on its carrier protein (BCCP) and then the CO(2) group is transferred by the transcarboxylase to acetyl-CoA to form malonyl-CoA.</text>
</comment>
<comment type="catalytic activity">
    <reaction evidence="1">
        <text>N(6)-carboxybiotinyl-L-lysyl-[protein] + acetyl-CoA = N(6)-biotinyl-L-lysyl-[protein] + malonyl-CoA</text>
        <dbReference type="Rhea" id="RHEA:54728"/>
        <dbReference type="Rhea" id="RHEA-COMP:10505"/>
        <dbReference type="Rhea" id="RHEA-COMP:10506"/>
        <dbReference type="ChEBI" id="CHEBI:57288"/>
        <dbReference type="ChEBI" id="CHEBI:57384"/>
        <dbReference type="ChEBI" id="CHEBI:83144"/>
        <dbReference type="ChEBI" id="CHEBI:83145"/>
        <dbReference type="EC" id="2.1.3.15"/>
    </reaction>
</comment>
<comment type="cofactor">
    <cofactor evidence="1">
        <name>Zn(2+)</name>
        <dbReference type="ChEBI" id="CHEBI:29105"/>
    </cofactor>
    <text evidence="1">Binds 1 zinc ion per subunit.</text>
</comment>
<comment type="pathway">
    <text evidence="1">Lipid metabolism; malonyl-CoA biosynthesis; malonyl-CoA from acetyl-CoA: step 1/1.</text>
</comment>
<comment type="subunit">
    <text evidence="1">Acetyl-CoA carboxylase is a heterohexamer composed of biotin carboxyl carrier protein (AccB), biotin carboxylase (AccC) and two subunits each of ACCase subunit alpha (AccA) and ACCase subunit beta (AccD).</text>
</comment>
<comment type="subcellular location">
    <subcellularLocation>
        <location evidence="1">Cytoplasm</location>
    </subcellularLocation>
</comment>
<comment type="similarity">
    <text evidence="1">Belongs to the AccD/PCCB family.</text>
</comment>
<organism>
    <name type="scientific">Shigella sonnei (strain Ss046)</name>
    <dbReference type="NCBI Taxonomy" id="300269"/>
    <lineage>
        <taxon>Bacteria</taxon>
        <taxon>Pseudomonadati</taxon>
        <taxon>Pseudomonadota</taxon>
        <taxon>Gammaproteobacteria</taxon>
        <taxon>Enterobacterales</taxon>
        <taxon>Enterobacteriaceae</taxon>
        <taxon>Shigella</taxon>
    </lineage>
</organism>
<gene>
    <name evidence="1" type="primary">accD</name>
    <name type="ordered locus">SSON_2374</name>
</gene>
<reference key="1">
    <citation type="journal article" date="2005" name="Nucleic Acids Res.">
        <title>Genome dynamics and diversity of Shigella species, the etiologic agents of bacillary dysentery.</title>
        <authorList>
            <person name="Yang F."/>
            <person name="Yang J."/>
            <person name="Zhang X."/>
            <person name="Chen L."/>
            <person name="Jiang Y."/>
            <person name="Yan Y."/>
            <person name="Tang X."/>
            <person name="Wang J."/>
            <person name="Xiong Z."/>
            <person name="Dong J."/>
            <person name="Xue Y."/>
            <person name="Zhu Y."/>
            <person name="Xu X."/>
            <person name="Sun L."/>
            <person name="Chen S."/>
            <person name="Nie H."/>
            <person name="Peng J."/>
            <person name="Xu J."/>
            <person name="Wang Y."/>
            <person name="Yuan Z."/>
            <person name="Wen Y."/>
            <person name="Yao Z."/>
            <person name="Shen Y."/>
            <person name="Qiang B."/>
            <person name="Hou Y."/>
            <person name="Yu J."/>
            <person name="Jin Q."/>
        </authorList>
    </citation>
    <scope>NUCLEOTIDE SEQUENCE [LARGE SCALE GENOMIC DNA]</scope>
    <source>
        <strain>Ss046</strain>
    </source>
</reference>
<proteinExistence type="inferred from homology"/>
<accession>Q3YZP5</accession>
<feature type="chain" id="PRO_0000359068" description="Acetyl-coenzyme A carboxylase carboxyl transferase subunit beta">
    <location>
        <begin position="1"/>
        <end position="304"/>
    </location>
</feature>
<feature type="domain" description="CoA carboxyltransferase N-terminal" evidence="2">
    <location>
        <begin position="23"/>
        <end position="292"/>
    </location>
</feature>
<feature type="zinc finger region" description="C4-type" evidence="1">
    <location>
        <begin position="27"/>
        <end position="49"/>
    </location>
</feature>
<feature type="region of interest" description="Disordered" evidence="3">
    <location>
        <begin position="285"/>
        <end position="304"/>
    </location>
</feature>
<feature type="compositionally biased region" description="Pro residues" evidence="3">
    <location>
        <begin position="295"/>
        <end position="304"/>
    </location>
</feature>
<feature type="binding site" evidence="1">
    <location>
        <position position="27"/>
    </location>
    <ligand>
        <name>Zn(2+)</name>
        <dbReference type="ChEBI" id="CHEBI:29105"/>
    </ligand>
</feature>
<feature type="binding site" evidence="1">
    <location>
        <position position="30"/>
    </location>
    <ligand>
        <name>Zn(2+)</name>
        <dbReference type="ChEBI" id="CHEBI:29105"/>
    </ligand>
</feature>
<feature type="binding site" evidence="1">
    <location>
        <position position="46"/>
    </location>
    <ligand>
        <name>Zn(2+)</name>
        <dbReference type="ChEBI" id="CHEBI:29105"/>
    </ligand>
</feature>
<feature type="binding site" evidence="1">
    <location>
        <position position="49"/>
    </location>
    <ligand>
        <name>Zn(2+)</name>
        <dbReference type="ChEBI" id="CHEBI:29105"/>
    </ligand>
</feature>